<protein>
    <recommendedName>
        <fullName evidence="1">Large ribosomal subunit protein bL33</fullName>
    </recommendedName>
    <alternativeName>
        <fullName evidence="2">50S ribosomal protein L33</fullName>
    </alternativeName>
</protein>
<keyword id="KW-1185">Reference proteome</keyword>
<keyword id="KW-0687">Ribonucleoprotein</keyword>
<keyword id="KW-0689">Ribosomal protein</keyword>
<proteinExistence type="inferred from homology"/>
<sequence length="49" mass="6151">MREKITLECTECKQRNYKSFKNKQNDRDRIELKKYCKFCNRHTLHKESK</sequence>
<comment type="similarity">
    <text evidence="1">Belongs to the bacterial ribosomal protein bL33 family.</text>
</comment>
<name>RL33_NATTJ</name>
<gene>
    <name evidence="1" type="primary">rpmG</name>
    <name type="ordered locus">Nther_0178</name>
</gene>
<evidence type="ECO:0000255" key="1">
    <source>
        <dbReference type="HAMAP-Rule" id="MF_00294"/>
    </source>
</evidence>
<evidence type="ECO:0000305" key="2"/>
<reference key="1">
    <citation type="submission" date="2008-04" db="EMBL/GenBank/DDBJ databases">
        <title>Complete sequence of chromosome of Natranaerobius thermophilus JW/NM-WN-LF.</title>
        <authorList>
            <consortium name="US DOE Joint Genome Institute"/>
            <person name="Copeland A."/>
            <person name="Lucas S."/>
            <person name="Lapidus A."/>
            <person name="Glavina del Rio T."/>
            <person name="Dalin E."/>
            <person name="Tice H."/>
            <person name="Bruce D."/>
            <person name="Goodwin L."/>
            <person name="Pitluck S."/>
            <person name="Chertkov O."/>
            <person name="Brettin T."/>
            <person name="Detter J.C."/>
            <person name="Han C."/>
            <person name="Kuske C.R."/>
            <person name="Schmutz J."/>
            <person name="Larimer F."/>
            <person name="Land M."/>
            <person name="Hauser L."/>
            <person name="Kyrpides N."/>
            <person name="Lykidis A."/>
            <person name="Mesbah N.M."/>
            <person name="Wiegel J."/>
        </authorList>
    </citation>
    <scope>NUCLEOTIDE SEQUENCE [LARGE SCALE GENOMIC DNA]</scope>
    <source>
        <strain>ATCC BAA-1301 / DSM 18059 / JW/NM-WN-LF</strain>
    </source>
</reference>
<feature type="chain" id="PRO_0000356580" description="Large ribosomal subunit protein bL33">
    <location>
        <begin position="1"/>
        <end position="49"/>
    </location>
</feature>
<organism>
    <name type="scientific">Natranaerobius thermophilus (strain ATCC BAA-1301 / DSM 18059 / JW/NM-WN-LF)</name>
    <dbReference type="NCBI Taxonomy" id="457570"/>
    <lineage>
        <taxon>Bacteria</taxon>
        <taxon>Bacillati</taxon>
        <taxon>Bacillota</taxon>
        <taxon>Clostridia</taxon>
        <taxon>Natranaerobiales</taxon>
        <taxon>Natranaerobiaceae</taxon>
        <taxon>Natranaerobius</taxon>
    </lineage>
</organism>
<dbReference type="EMBL" id="CP001034">
    <property type="protein sequence ID" value="ACB83777.1"/>
    <property type="molecule type" value="Genomic_DNA"/>
</dbReference>
<dbReference type="RefSeq" id="WP_012446668.1">
    <property type="nucleotide sequence ID" value="NC_010718.1"/>
</dbReference>
<dbReference type="SMR" id="B2A4C3"/>
<dbReference type="FunCoup" id="B2A4C3">
    <property type="interactions" value="175"/>
</dbReference>
<dbReference type="STRING" id="457570.Nther_0178"/>
<dbReference type="KEGG" id="nth:Nther_0178"/>
<dbReference type="eggNOG" id="COG0267">
    <property type="taxonomic scope" value="Bacteria"/>
</dbReference>
<dbReference type="HOGENOM" id="CLU_190949_0_2_9"/>
<dbReference type="InParanoid" id="B2A4C3"/>
<dbReference type="OrthoDB" id="9801333at2"/>
<dbReference type="Proteomes" id="UP000001683">
    <property type="component" value="Chromosome"/>
</dbReference>
<dbReference type="GO" id="GO:0005737">
    <property type="term" value="C:cytoplasm"/>
    <property type="evidence" value="ECO:0007669"/>
    <property type="project" value="UniProtKB-ARBA"/>
</dbReference>
<dbReference type="GO" id="GO:1990904">
    <property type="term" value="C:ribonucleoprotein complex"/>
    <property type="evidence" value="ECO:0007669"/>
    <property type="project" value="UniProtKB-KW"/>
</dbReference>
<dbReference type="GO" id="GO:0005840">
    <property type="term" value="C:ribosome"/>
    <property type="evidence" value="ECO:0007669"/>
    <property type="project" value="UniProtKB-KW"/>
</dbReference>
<dbReference type="GO" id="GO:0003735">
    <property type="term" value="F:structural constituent of ribosome"/>
    <property type="evidence" value="ECO:0007669"/>
    <property type="project" value="InterPro"/>
</dbReference>
<dbReference type="GO" id="GO:0006412">
    <property type="term" value="P:translation"/>
    <property type="evidence" value="ECO:0007669"/>
    <property type="project" value="UniProtKB-UniRule"/>
</dbReference>
<dbReference type="Gene3D" id="2.20.28.120">
    <property type="entry name" value="Ribosomal protein L33"/>
    <property type="match status" value="1"/>
</dbReference>
<dbReference type="HAMAP" id="MF_00294">
    <property type="entry name" value="Ribosomal_bL33"/>
    <property type="match status" value="1"/>
</dbReference>
<dbReference type="InterPro" id="IPR001705">
    <property type="entry name" value="Ribosomal_bL33"/>
</dbReference>
<dbReference type="InterPro" id="IPR038584">
    <property type="entry name" value="Ribosomal_bL33_sf"/>
</dbReference>
<dbReference type="InterPro" id="IPR011332">
    <property type="entry name" value="Ribosomal_zn-bd"/>
</dbReference>
<dbReference type="NCBIfam" id="NF001764">
    <property type="entry name" value="PRK00504.1"/>
    <property type="match status" value="1"/>
</dbReference>
<dbReference type="NCBIfam" id="NF001860">
    <property type="entry name" value="PRK00595.1"/>
    <property type="match status" value="1"/>
</dbReference>
<dbReference type="NCBIfam" id="TIGR01023">
    <property type="entry name" value="rpmG_bact"/>
    <property type="match status" value="1"/>
</dbReference>
<dbReference type="PANTHER" id="PTHR43168">
    <property type="entry name" value="50S RIBOSOMAL PROTEIN L33, CHLOROPLASTIC"/>
    <property type="match status" value="1"/>
</dbReference>
<dbReference type="PANTHER" id="PTHR43168:SF2">
    <property type="entry name" value="LARGE RIBOSOMAL SUBUNIT PROTEIN BL33C"/>
    <property type="match status" value="1"/>
</dbReference>
<dbReference type="Pfam" id="PF00471">
    <property type="entry name" value="Ribosomal_L33"/>
    <property type="match status" value="1"/>
</dbReference>
<dbReference type="SUPFAM" id="SSF57829">
    <property type="entry name" value="Zn-binding ribosomal proteins"/>
    <property type="match status" value="1"/>
</dbReference>
<accession>B2A4C3</accession>